<evidence type="ECO:0000250" key="1"/>
<evidence type="ECO:0000255" key="2">
    <source>
        <dbReference type="HAMAP-Rule" id="MF_00403"/>
    </source>
</evidence>
<evidence type="ECO:0000256" key="3">
    <source>
        <dbReference type="SAM" id="MobiDB-lite"/>
    </source>
</evidence>
<evidence type="ECO:0000305" key="4"/>
<proteinExistence type="inferred from homology"/>
<accession>B1MW23</accession>
<feature type="chain" id="PRO_1000194187" description="Small ribosomal subunit protein uS12">
    <location>
        <begin position="1"/>
        <end position="137"/>
    </location>
</feature>
<feature type="region of interest" description="Disordered" evidence="3">
    <location>
        <begin position="1"/>
        <end position="23"/>
    </location>
</feature>
<feature type="modified residue" description="3-methylthioaspartic acid" evidence="1">
    <location>
        <position position="102"/>
    </location>
</feature>
<comment type="function">
    <text evidence="2">With S4 and S5 plays an important role in translational accuracy.</text>
</comment>
<comment type="function">
    <text evidence="2">Interacts with and stabilizes bases of the 16S rRNA that are involved in tRNA selection in the A site and with the mRNA backbone. Located at the interface of the 30S and 50S subunits, it traverses the body of the 30S subunit contacting proteins on the other side and probably holding the rRNA structure together. The combined cluster of proteins S8, S12 and S17 appears to hold together the shoulder and platform of the 30S subunit.</text>
</comment>
<comment type="subunit">
    <text evidence="2">Part of the 30S ribosomal subunit. Contacts proteins S8 and S17. May interact with IF1 in the 30S initiation complex.</text>
</comment>
<comment type="similarity">
    <text evidence="2">Belongs to the universal ribosomal protein uS12 family.</text>
</comment>
<gene>
    <name evidence="2" type="primary">rpsL</name>
    <name type="ordered locus">LCK_01604</name>
</gene>
<dbReference type="EMBL" id="DQ489736">
    <property type="protein sequence ID" value="ACA83427.1"/>
    <property type="molecule type" value="Genomic_DNA"/>
</dbReference>
<dbReference type="RefSeq" id="WP_004899477.1">
    <property type="nucleotide sequence ID" value="NC_010471.1"/>
</dbReference>
<dbReference type="SMR" id="B1MW23"/>
<dbReference type="STRING" id="349519.LCK_01604"/>
<dbReference type="GeneID" id="61103232"/>
<dbReference type="KEGG" id="lci:LCK_01604"/>
<dbReference type="eggNOG" id="COG0048">
    <property type="taxonomic scope" value="Bacteria"/>
</dbReference>
<dbReference type="HOGENOM" id="CLU_104295_1_2_9"/>
<dbReference type="OrthoDB" id="9802366at2"/>
<dbReference type="Proteomes" id="UP000002166">
    <property type="component" value="Chromosome"/>
</dbReference>
<dbReference type="GO" id="GO:0015935">
    <property type="term" value="C:small ribosomal subunit"/>
    <property type="evidence" value="ECO:0007669"/>
    <property type="project" value="InterPro"/>
</dbReference>
<dbReference type="GO" id="GO:0019843">
    <property type="term" value="F:rRNA binding"/>
    <property type="evidence" value="ECO:0007669"/>
    <property type="project" value="UniProtKB-UniRule"/>
</dbReference>
<dbReference type="GO" id="GO:0003735">
    <property type="term" value="F:structural constituent of ribosome"/>
    <property type="evidence" value="ECO:0007669"/>
    <property type="project" value="InterPro"/>
</dbReference>
<dbReference type="GO" id="GO:0000049">
    <property type="term" value="F:tRNA binding"/>
    <property type="evidence" value="ECO:0007669"/>
    <property type="project" value="UniProtKB-UniRule"/>
</dbReference>
<dbReference type="GO" id="GO:0006412">
    <property type="term" value="P:translation"/>
    <property type="evidence" value="ECO:0007669"/>
    <property type="project" value="UniProtKB-UniRule"/>
</dbReference>
<dbReference type="CDD" id="cd03368">
    <property type="entry name" value="Ribosomal_S12"/>
    <property type="match status" value="1"/>
</dbReference>
<dbReference type="FunFam" id="2.40.50.140:FF:000001">
    <property type="entry name" value="30S ribosomal protein S12"/>
    <property type="match status" value="1"/>
</dbReference>
<dbReference type="Gene3D" id="2.40.50.140">
    <property type="entry name" value="Nucleic acid-binding proteins"/>
    <property type="match status" value="1"/>
</dbReference>
<dbReference type="HAMAP" id="MF_00403_B">
    <property type="entry name" value="Ribosomal_uS12_B"/>
    <property type="match status" value="1"/>
</dbReference>
<dbReference type="InterPro" id="IPR012340">
    <property type="entry name" value="NA-bd_OB-fold"/>
</dbReference>
<dbReference type="InterPro" id="IPR006032">
    <property type="entry name" value="Ribosomal_uS12"/>
</dbReference>
<dbReference type="InterPro" id="IPR005679">
    <property type="entry name" value="Ribosomal_uS12_bac"/>
</dbReference>
<dbReference type="NCBIfam" id="TIGR00981">
    <property type="entry name" value="rpsL_bact"/>
    <property type="match status" value="1"/>
</dbReference>
<dbReference type="PANTHER" id="PTHR11652">
    <property type="entry name" value="30S RIBOSOMAL PROTEIN S12 FAMILY MEMBER"/>
    <property type="match status" value="1"/>
</dbReference>
<dbReference type="Pfam" id="PF00164">
    <property type="entry name" value="Ribosom_S12_S23"/>
    <property type="match status" value="1"/>
</dbReference>
<dbReference type="PIRSF" id="PIRSF002133">
    <property type="entry name" value="Ribosomal_S12/S23"/>
    <property type="match status" value="1"/>
</dbReference>
<dbReference type="PRINTS" id="PR01034">
    <property type="entry name" value="RIBOSOMALS12"/>
</dbReference>
<dbReference type="SUPFAM" id="SSF50249">
    <property type="entry name" value="Nucleic acid-binding proteins"/>
    <property type="match status" value="1"/>
</dbReference>
<dbReference type="PROSITE" id="PS00055">
    <property type="entry name" value="RIBOSOMAL_S12"/>
    <property type="match status" value="1"/>
</dbReference>
<organism>
    <name type="scientific">Leuconostoc citreum (strain KM20)</name>
    <dbReference type="NCBI Taxonomy" id="349519"/>
    <lineage>
        <taxon>Bacteria</taxon>
        <taxon>Bacillati</taxon>
        <taxon>Bacillota</taxon>
        <taxon>Bacilli</taxon>
        <taxon>Lactobacillales</taxon>
        <taxon>Lactobacillaceae</taxon>
        <taxon>Leuconostoc</taxon>
    </lineage>
</organism>
<name>RS12_LEUCK</name>
<reference key="1">
    <citation type="journal article" date="2008" name="J. Bacteriol.">
        <title>Complete genome sequence of Leuconostoc citreum KM20.</title>
        <authorList>
            <person name="Kim J.F."/>
            <person name="Jeong H."/>
            <person name="Lee J.-S."/>
            <person name="Choi S.-H."/>
            <person name="Ha M."/>
            <person name="Hur C.-G."/>
            <person name="Kim J.-S."/>
            <person name="Lee S."/>
            <person name="Park H.-S."/>
            <person name="Park Y.-H."/>
            <person name="Oh T.K."/>
        </authorList>
    </citation>
    <scope>NUCLEOTIDE SEQUENCE [LARGE SCALE GENOMIC DNA]</scope>
    <source>
        <strain>KM20</strain>
    </source>
</reference>
<protein>
    <recommendedName>
        <fullName evidence="2">Small ribosomal subunit protein uS12</fullName>
    </recommendedName>
    <alternativeName>
        <fullName evidence="4">30S ribosomal protein S12</fullName>
    </alternativeName>
</protein>
<sequence>MPTINQLVRKPRKSNATKSKSPALNFGYNSMKKKATNNVAPQKRGVATRVGTMTPKKPNSALRKYARVRLSNLYEVTAYIPGIGHNLQEHSVVLIRGGRVKDLPGVRYHIIRGALDTAGVDGRMTSRSKYGTKAPKK</sequence>
<keyword id="KW-0488">Methylation</keyword>
<keyword id="KW-1185">Reference proteome</keyword>
<keyword id="KW-0687">Ribonucleoprotein</keyword>
<keyword id="KW-0689">Ribosomal protein</keyword>
<keyword id="KW-0694">RNA-binding</keyword>
<keyword id="KW-0699">rRNA-binding</keyword>
<keyword id="KW-0820">tRNA-binding</keyword>